<reference key="1">
    <citation type="submission" date="2009-12" db="EMBL/GenBank/DDBJ databases">
        <title>The draft genome of Batrachochytrium dendrobatidis.</title>
        <authorList>
            <consortium name="US DOE Joint Genome Institute (JGI-PGF)"/>
            <person name="Kuo A."/>
            <person name="Salamov A."/>
            <person name="Schmutz J."/>
            <person name="Lucas S."/>
            <person name="Pitluck S."/>
            <person name="Rosenblum E."/>
            <person name="Stajich J."/>
            <person name="Eisen M."/>
            <person name="Grigoriev I.V."/>
        </authorList>
    </citation>
    <scope>NUCLEOTIDE SEQUENCE [LARGE SCALE GENOMIC DNA]</scope>
    <source>
        <strain>JAM81 / FGSC 10211</strain>
    </source>
</reference>
<organism>
    <name type="scientific">Batrachochytrium dendrobatidis (strain JAM81 / FGSC 10211)</name>
    <name type="common">Frog chytrid fungus</name>
    <dbReference type="NCBI Taxonomy" id="684364"/>
    <lineage>
        <taxon>Eukaryota</taxon>
        <taxon>Fungi</taxon>
        <taxon>Fungi incertae sedis</taxon>
        <taxon>Chytridiomycota</taxon>
        <taxon>Chytridiomycota incertae sedis</taxon>
        <taxon>Chytridiomycetes</taxon>
        <taxon>Rhizophydiales</taxon>
        <taxon>Rhizophydiales incertae sedis</taxon>
        <taxon>Batrachochytrium</taxon>
    </lineage>
</organism>
<proteinExistence type="inferred from homology"/>
<protein>
    <recommendedName>
        <fullName evidence="1">ATP-dependent (S)-NAD(P)H-hydrate dehydratase</fullName>
        <ecNumber evidence="1">4.2.1.93</ecNumber>
    </recommendedName>
    <alternativeName>
        <fullName evidence="1">ATP-dependent NAD(P)HX dehydratase</fullName>
    </alternativeName>
</protein>
<feature type="chain" id="PRO_0000416179" description="ATP-dependent (S)-NAD(P)H-hydrate dehydratase">
    <location>
        <begin position="1"/>
        <end position="318"/>
    </location>
</feature>
<feature type="domain" description="YjeF C-terminal" evidence="1">
    <location>
        <begin position="3"/>
        <end position="313"/>
    </location>
</feature>
<feature type="binding site" evidence="1">
    <location>
        <position position="119"/>
    </location>
    <ligand>
        <name>(6S)-NADPHX</name>
        <dbReference type="ChEBI" id="CHEBI:64076"/>
    </ligand>
</feature>
<feature type="binding site" evidence="1">
    <location>
        <begin position="172"/>
        <end position="178"/>
    </location>
    <ligand>
        <name>(6S)-NADPHX</name>
        <dbReference type="ChEBI" id="CHEBI:64076"/>
    </ligand>
</feature>
<feature type="binding site" evidence="1">
    <location>
        <begin position="210"/>
        <end position="214"/>
    </location>
    <ligand>
        <name>ATP</name>
        <dbReference type="ChEBI" id="CHEBI:30616"/>
    </ligand>
</feature>
<feature type="binding site" evidence="1">
    <location>
        <begin position="229"/>
        <end position="238"/>
    </location>
    <ligand>
        <name>ATP</name>
        <dbReference type="ChEBI" id="CHEBI:30616"/>
    </ligand>
</feature>
<feature type="binding site" evidence="1">
    <location>
        <position position="239"/>
    </location>
    <ligand>
        <name>(6S)-NADPHX</name>
        <dbReference type="ChEBI" id="CHEBI:64076"/>
    </ligand>
</feature>
<dbReference type="EC" id="4.2.1.93" evidence="1"/>
<dbReference type="EMBL" id="GL882881">
    <property type="protein sequence ID" value="EGF81817.1"/>
    <property type="molecule type" value="Genomic_DNA"/>
</dbReference>
<dbReference type="RefSeq" id="XP_006677152.1">
    <property type="nucleotide sequence ID" value="XM_006677089.1"/>
</dbReference>
<dbReference type="SMR" id="F4NZ38"/>
<dbReference type="FunCoup" id="F4NZ38">
    <property type="interactions" value="19"/>
</dbReference>
<dbReference type="STRING" id="684364.F4NZ38"/>
<dbReference type="GeneID" id="18236428"/>
<dbReference type="HOGENOM" id="CLU_030651_3_0_1"/>
<dbReference type="InParanoid" id="F4NZ38"/>
<dbReference type="OMA" id="WRAAYHN"/>
<dbReference type="OrthoDB" id="8110916at2759"/>
<dbReference type="Proteomes" id="UP000007241">
    <property type="component" value="Unassembled WGS sequence"/>
</dbReference>
<dbReference type="GO" id="GO:0005737">
    <property type="term" value="C:cytoplasm"/>
    <property type="evidence" value="ECO:0007669"/>
    <property type="project" value="UniProtKB-SubCell"/>
</dbReference>
<dbReference type="GO" id="GO:0005524">
    <property type="term" value="F:ATP binding"/>
    <property type="evidence" value="ECO:0007669"/>
    <property type="project" value="UniProtKB-KW"/>
</dbReference>
<dbReference type="GO" id="GO:0047453">
    <property type="term" value="F:ATP-dependent NAD(P)H-hydrate dehydratase activity"/>
    <property type="evidence" value="ECO:0000318"/>
    <property type="project" value="GO_Central"/>
</dbReference>
<dbReference type="GO" id="GO:0110051">
    <property type="term" value="P:metabolite repair"/>
    <property type="evidence" value="ECO:0000318"/>
    <property type="project" value="GO_Central"/>
</dbReference>
<dbReference type="GO" id="GO:0046496">
    <property type="term" value="P:nicotinamide nucleotide metabolic process"/>
    <property type="evidence" value="ECO:0007669"/>
    <property type="project" value="UniProtKB-UniRule"/>
</dbReference>
<dbReference type="CDD" id="cd01171">
    <property type="entry name" value="YXKO-related"/>
    <property type="match status" value="1"/>
</dbReference>
<dbReference type="FunFam" id="3.40.1190.20:FF:000023">
    <property type="entry name" value="ATP-dependent (S)-NAD(P)H-hydrate dehydratase"/>
    <property type="match status" value="1"/>
</dbReference>
<dbReference type="Gene3D" id="3.40.1190.20">
    <property type="match status" value="1"/>
</dbReference>
<dbReference type="HAMAP" id="MF_01965">
    <property type="entry name" value="NADHX_dehydratase"/>
    <property type="match status" value="1"/>
</dbReference>
<dbReference type="InterPro" id="IPR017953">
    <property type="entry name" value="Carbohydrate_kinase_pred_CS"/>
</dbReference>
<dbReference type="InterPro" id="IPR000631">
    <property type="entry name" value="CARKD"/>
</dbReference>
<dbReference type="InterPro" id="IPR029056">
    <property type="entry name" value="Ribokinase-like"/>
</dbReference>
<dbReference type="NCBIfam" id="TIGR00196">
    <property type="entry name" value="yjeF_cterm"/>
    <property type="match status" value="1"/>
</dbReference>
<dbReference type="PANTHER" id="PTHR12592:SF0">
    <property type="entry name" value="ATP-DEPENDENT (S)-NAD(P)H-HYDRATE DEHYDRATASE"/>
    <property type="match status" value="1"/>
</dbReference>
<dbReference type="PANTHER" id="PTHR12592">
    <property type="entry name" value="ATP-DEPENDENT (S)-NAD(P)H-HYDRATE DEHYDRATASE FAMILY MEMBER"/>
    <property type="match status" value="1"/>
</dbReference>
<dbReference type="Pfam" id="PF01256">
    <property type="entry name" value="Carb_kinase"/>
    <property type="match status" value="1"/>
</dbReference>
<dbReference type="SUPFAM" id="SSF53613">
    <property type="entry name" value="Ribokinase-like"/>
    <property type="match status" value="1"/>
</dbReference>
<dbReference type="PROSITE" id="PS01050">
    <property type="entry name" value="YJEF_C_2"/>
    <property type="match status" value="1"/>
</dbReference>
<dbReference type="PROSITE" id="PS51383">
    <property type="entry name" value="YJEF_C_3"/>
    <property type="match status" value="1"/>
</dbReference>
<sequence length="318" mass="34075">MAAREVFKRVIPPLSTRLHKGQSGRIGVVGGSLEYTGAPYYAAMAALYTGVDLCHVFCAQDAAPAIKCYSPELVVHPSIVSKRDCEHLNPVAIDNCIETAVDRMSPLLCRLDSLVVGPGLSRDPVMLAMAKRIVEKVISLGTPLVIDADGLCLVEQTPGLVMGYQNVILTPNTNEFKRLCHSVNIDASENCEVAAVQLSKALGSVTILCKGSKDLIATGDDILFVSDPTSLRRCGGQGDVLAGILCAFLAWRNGYQSGRWTAQDQSTDISLMIVASNASSFARKCAALAFEKHKRSIVASSILKEIGPAFDSLYDDEL</sequence>
<gene>
    <name type="ORF">BATDEDRAFT_10166</name>
</gene>
<comment type="function">
    <text evidence="1">Catalyzes the dehydration of the S-form of NAD(P)HX at the expense of ATP, which is converted to ADP. Together with NAD(P)HX epimerase, which catalyzes the epimerization of the S- and R-forms, the enzyme allows the repair of both epimers of NAD(P)HX, a damaged form of NAD(P)H that is a result of enzymatic or heat-dependent hydration.</text>
</comment>
<comment type="catalytic activity">
    <reaction evidence="1">
        <text>(6S)-NADHX + ATP = ADP + phosphate + NADH + H(+)</text>
        <dbReference type="Rhea" id="RHEA:19017"/>
        <dbReference type="ChEBI" id="CHEBI:15378"/>
        <dbReference type="ChEBI" id="CHEBI:30616"/>
        <dbReference type="ChEBI" id="CHEBI:43474"/>
        <dbReference type="ChEBI" id="CHEBI:57945"/>
        <dbReference type="ChEBI" id="CHEBI:64074"/>
        <dbReference type="ChEBI" id="CHEBI:456216"/>
        <dbReference type="EC" id="4.2.1.93"/>
    </reaction>
</comment>
<comment type="catalytic activity">
    <reaction>
        <text>(6S)-NADPHX + ATP = ADP + phosphate + NADPH + H(+)</text>
        <dbReference type="Rhea" id="RHEA:32231"/>
        <dbReference type="ChEBI" id="CHEBI:15378"/>
        <dbReference type="ChEBI" id="CHEBI:30616"/>
        <dbReference type="ChEBI" id="CHEBI:43474"/>
        <dbReference type="ChEBI" id="CHEBI:57783"/>
        <dbReference type="ChEBI" id="CHEBI:64076"/>
        <dbReference type="ChEBI" id="CHEBI:456216"/>
        <dbReference type="EC" id="4.2.1.93"/>
    </reaction>
</comment>
<comment type="cofactor">
    <cofactor evidence="1">
        <name>Mg(2+)</name>
        <dbReference type="ChEBI" id="CHEBI:18420"/>
    </cofactor>
</comment>
<comment type="subcellular location">
    <subcellularLocation>
        <location evidence="1">Cytoplasm</location>
    </subcellularLocation>
</comment>
<comment type="similarity">
    <text evidence="1">Belongs to the NnrD/CARKD family.</text>
</comment>
<evidence type="ECO:0000255" key="1">
    <source>
        <dbReference type="HAMAP-Rule" id="MF_03157"/>
    </source>
</evidence>
<accession>F4NZ38</accession>
<name>NNRD_BATDJ</name>
<keyword id="KW-0067">ATP-binding</keyword>
<keyword id="KW-0963">Cytoplasm</keyword>
<keyword id="KW-0456">Lyase</keyword>
<keyword id="KW-0520">NAD</keyword>
<keyword id="KW-0521">NADP</keyword>
<keyword id="KW-0547">Nucleotide-binding</keyword>
<keyword id="KW-0597">Phosphoprotein</keyword>
<keyword id="KW-1185">Reference proteome</keyword>